<protein>
    <recommendedName>
        <fullName>UPF0098 protein TC_0109</fullName>
    </recommendedName>
</protein>
<proteinExistence type="inferred from homology"/>
<sequence>MQLTSQAFSYGRPIPKKYSCQGVGISPPLSFSDIPSEAKSLALIVEDPDVPANVREDGLWIHWIVYNLSPIVSNLAEGAQIFAVQGINTAGEIGYCPPCPPDAKHRYYFYAYALDVVLPEEEGVTKEQLLEAMEGHILATAELMGTYEQD</sequence>
<evidence type="ECO:0000305" key="1"/>
<dbReference type="EMBL" id="AE002160">
    <property type="protein sequence ID" value="AAF38988.1"/>
    <property type="molecule type" value="Genomic_DNA"/>
</dbReference>
<dbReference type="PIR" id="F81740">
    <property type="entry name" value="F81740"/>
</dbReference>
<dbReference type="RefSeq" id="WP_010229395.1">
    <property type="nucleotide sequence ID" value="NZ_CP063055.1"/>
</dbReference>
<dbReference type="SMR" id="Q9PLJ0"/>
<dbReference type="GeneID" id="1245639"/>
<dbReference type="KEGG" id="cmu:TC_0109"/>
<dbReference type="eggNOG" id="COG1881">
    <property type="taxonomic scope" value="Bacteria"/>
</dbReference>
<dbReference type="HOGENOM" id="CLU_083918_3_2_0"/>
<dbReference type="OrthoDB" id="9797506at2"/>
<dbReference type="Proteomes" id="UP000000800">
    <property type="component" value="Chromosome"/>
</dbReference>
<dbReference type="CDD" id="cd00865">
    <property type="entry name" value="PEBP_bact_arch"/>
    <property type="match status" value="1"/>
</dbReference>
<dbReference type="Gene3D" id="3.90.280.10">
    <property type="entry name" value="PEBP-like"/>
    <property type="match status" value="1"/>
</dbReference>
<dbReference type="InterPro" id="IPR008914">
    <property type="entry name" value="PEBP"/>
</dbReference>
<dbReference type="InterPro" id="IPR036610">
    <property type="entry name" value="PEBP-like_sf"/>
</dbReference>
<dbReference type="InterPro" id="IPR005247">
    <property type="entry name" value="YbhB_YbcL/LppC-like"/>
</dbReference>
<dbReference type="NCBIfam" id="TIGR00481">
    <property type="entry name" value="YbhB/YbcL family Raf kinase inhibitor-like protein"/>
    <property type="match status" value="1"/>
</dbReference>
<dbReference type="PANTHER" id="PTHR30289:SF1">
    <property type="entry name" value="PEBP (PHOSPHATIDYLETHANOLAMINE-BINDING PROTEIN) FAMILY PROTEIN"/>
    <property type="match status" value="1"/>
</dbReference>
<dbReference type="PANTHER" id="PTHR30289">
    <property type="entry name" value="UNCHARACTERIZED PROTEIN YBCL-RELATED"/>
    <property type="match status" value="1"/>
</dbReference>
<dbReference type="Pfam" id="PF01161">
    <property type="entry name" value="PBP"/>
    <property type="match status" value="1"/>
</dbReference>
<dbReference type="SUPFAM" id="SSF49777">
    <property type="entry name" value="PEBP-like"/>
    <property type="match status" value="1"/>
</dbReference>
<reference key="1">
    <citation type="journal article" date="2000" name="Nucleic Acids Res.">
        <title>Genome sequences of Chlamydia trachomatis MoPn and Chlamydia pneumoniae AR39.</title>
        <authorList>
            <person name="Read T.D."/>
            <person name="Brunham R.C."/>
            <person name="Shen C."/>
            <person name="Gill S.R."/>
            <person name="Heidelberg J.F."/>
            <person name="White O."/>
            <person name="Hickey E.K."/>
            <person name="Peterson J.D."/>
            <person name="Utterback T.R."/>
            <person name="Berry K.J."/>
            <person name="Bass S."/>
            <person name="Linher K.D."/>
            <person name="Weidman J.F."/>
            <person name="Khouri H.M."/>
            <person name="Craven B."/>
            <person name="Bowman C."/>
            <person name="Dodson R.J."/>
            <person name="Gwinn M.L."/>
            <person name="Nelson W.C."/>
            <person name="DeBoy R.T."/>
            <person name="Kolonay J.F."/>
            <person name="McClarty G."/>
            <person name="Salzberg S.L."/>
            <person name="Eisen J.A."/>
            <person name="Fraser C.M."/>
        </authorList>
    </citation>
    <scope>NUCLEOTIDE SEQUENCE [LARGE SCALE GENOMIC DNA]</scope>
    <source>
        <strain>MoPn / Nigg</strain>
    </source>
</reference>
<name>Y109_CHLMU</name>
<gene>
    <name type="ordered locus">TC_0109</name>
</gene>
<comment type="similarity">
    <text evidence="1">Belongs to the UPF0098 family.</text>
</comment>
<feature type="chain" id="PRO_0000137902" description="UPF0098 protein TC_0109">
    <location>
        <begin position="1"/>
        <end position="150"/>
    </location>
</feature>
<accession>Q9PLJ0</accession>
<organism>
    <name type="scientific">Chlamydia muridarum (strain MoPn / Nigg)</name>
    <dbReference type="NCBI Taxonomy" id="243161"/>
    <lineage>
        <taxon>Bacteria</taxon>
        <taxon>Pseudomonadati</taxon>
        <taxon>Chlamydiota</taxon>
        <taxon>Chlamydiia</taxon>
        <taxon>Chlamydiales</taxon>
        <taxon>Chlamydiaceae</taxon>
        <taxon>Chlamydia/Chlamydophila group</taxon>
        <taxon>Chlamydia</taxon>
    </lineage>
</organism>